<protein>
    <recommendedName>
        <fullName evidence="1">Probable cytosol aminopeptidase</fullName>
        <ecNumber evidence="1">3.4.11.1</ecNumber>
    </recommendedName>
    <alternativeName>
        <fullName evidence="1">Leucine aminopeptidase</fullName>
        <shortName evidence="1">LAP</shortName>
        <ecNumber evidence="1">3.4.11.10</ecNumber>
    </alternativeName>
    <alternativeName>
        <fullName evidence="1">Leucyl aminopeptidase</fullName>
    </alternativeName>
</protein>
<reference key="1">
    <citation type="journal article" date="2003" name="Nat. Genet.">
        <title>Comparative analysis of the genome sequences of Bordetella pertussis, Bordetella parapertussis and Bordetella bronchiseptica.</title>
        <authorList>
            <person name="Parkhill J."/>
            <person name="Sebaihia M."/>
            <person name="Preston A."/>
            <person name="Murphy L.D."/>
            <person name="Thomson N.R."/>
            <person name="Harris D.E."/>
            <person name="Holden M.T.G."/>
            <person name="Churcher C.M."/>
            <person name="Bentley S.D."/>
            <person name="Mungall K.L."/>
            <person name="Cerdeno-Tarraga A.-M."/>
            <person name="Temple L."/>
            <person name="James K.D."/>
            <person name="Harris B."/>
            <person name="Quail M.A."/>
            <person name="Achtman M."/>
            <person name="Atkin R."/>
            <person name="Baker S."/>
            <person name="Basham D."/>
            <person name="Bason N."/>
            <person name="Cherevach I."/>
            <person name="Chillingworth T."/>
            <person name="Collins M."/>
            <person name="Cronin A."/>
            <person name="Davis P."/>
            <person name="Doggett J."/>
            <person name="Feltwell T."/>
            <person name="Goble A."/>
            <person name="Hamlin N."/>
            <person name="Hauser H."/>
            <person name="Holroyd S."/>
            <person name="Jagels K."/>
            <person name="Leather S."/>
            <person name="Moule S."/>
            <person name="Norberczak H."/>
            <person name="O'Neil S."/>
            <person name="Ormond D."/>
            <person name="Price C."/>
            <person name="Rabbinowitsch E."/>
            <person name="Rutter S."/>
            <person name="Sanders M."/>
            <person name="Saunders D."/>
            <person name="Seeger K."/>
            <person name="Sharp S."/>
            <person name="Simmonds M."/>
            <person name="Skelton J."/>
            <person name="Squares R."/>
            <person name="Squares S."/>
            <person name="Stevens K."/>
            <person name="Unwin L."/>
            <person name="Whitehead S."/>
            <person name="Barrell B.G."/>
            <person name="Maskell D.J."/>
        </authorList>
    </citation>
    <scope>NUCLEOTIDE SEQUENCE [LARGE SCALE GENOMIC DNA]</scope>
    <source>
        <strain>Tohama I / ATCC BAA-589 / NCTC 13251</strain>
    </source>
</reference>
<accession>Q7VW48</accession>
<feature type="chain" id="PRO_0000165726" description="Probable cytosol aminopeptidase">
    <location>
        <begin position="1"/>
        <end position="499"/>
    </location>
</feature>
<feature type="active site" evidence="1">
    <location>
        <position position="283"/>
    </location>
</feature>
<feature type="active site" evidence="1">
    <location>
        <position position="357"/>
    </location>
</feature>
<feature type="binding site" evidence="1">
    <location>
        <position position="271"/>
    </location>
    <ligand>
        <name>Mn(2+)</name>
        <dbReference type="ChEBI" id="CHEBI:29035"/>
        <label>2</label>
    </ligand>
</feature>
<feature type="binding site" evidence="1">
    <location>
        <position position="276"/>
    </location>
    <ligand>
        <name>Mn(2+)</name>
        <dbReference type="ChEBI" id="CHEBI:29035"/>
        <label>1</label>
    </ligand>
</feature>
<feature type="binding site" evidence="1">
    <location>
        <position position="276"/>
    </location>
    <ligand>
        <name>Mn(2+)</name>
        <dbReference type="ChEBI" id="CHEBI:29035"/>
        <label>2</label>
    </ligand>
</feature>
<feature type="binding site" evidence="1">
    <location>
        <position position="294"/>
    </location>
    <ligand>
        <name>Mn(2+)</name>
        <dbReference type="ChEBI" id="CHEBI:29035"/>
        <label>2</label>
    </ligand>
</feature>
<feature type="binding site" evidence="1">
    <location>
        <position position="353"/>
    </location>
    <ligand>
        <name>Mn(2+)</name>
        <dbReference type="ChEBI" id="CHEBI:29035"/>
        <label>1</label>
    </ligand>
</feature>
<feature type="binding site" evidence="1">
    <location>
        <position position="355"/>
    </location>
    <ligand>
        <name>Mn(2+)</name>
        <dbReference type="ChEBI" id="CHEBI:29035"/>
        <label>1</label>
    </ligand>
</feature>
<feature type="binding site" evidence="1">
    <location>
        <position position="355"/>
    </location>
    <ligand>
        <name>Mn(2+)</name>
        <dbReference type="ChEBI" id="CHEBI:29035"/>
        <label>2</label>
    </ligand>
</feature>
<proteinExistence type="inferred from homology"/>
<evidence type="ECO:0000255" key="1">
    <source>
        <dbReference type="HAMAP-Rule" id="MF_00181"/>
    </source>
</evidence>
<keyword id="KW-0031">Aminopeptidase</keyword>
<keyword id="KW-0963">Cytoplasm</keyword>
<keyword id="KW-0378">Hydrolase</keyword>
<keyword id="KW-0464">Manganese</keyword>
<keyword id="KW-0479">Metal-binding</keyword>
<keyword id="KW-0645">Protease</keyword>
<keyword id="KW-1185">Reference proteome</keyword>
<comment type="function">
    <text evidence="1">Presumably involved in the processing and regular turnover of intracellular proteins. Catalyzes the removal of unsubstituted N-terminal amino acids from various peptides.</text>
</comment>
<comment type="catalytic activity">
    <reaction evidence="1">
        <text>Release of an N-terminal amino acid, Xaa-|-Yaa-, in which Xaa is preferably Leu, but may be other amino acids including Pro although not Arg or Lys, and Yaa may be Pro. Amino acid amides and methyl esters are also readily hydrolyzed, but rates on arylamides are exceedingly low.</text>
        <dbReference type="EC" id="3.4.11.1"/>
    </reaction>
</comment>
<comment type="catalytic activity">
    <reaction evidence="1">
        <text>Release of an N-terminal amino acid, preferentially leucine, but not glutamic or aspartic acids.</text>
        <dbReference type="EC" id="3.4.11.10"/>
    </reaction>
</comment>
<comment type="cofactor">
    <cofactor evidence="1">
        <name>Mn(2+)</name>
        <dbReference type="ChEBI" id="CHEBI:29035"/>
    </cofactor>
    <text evidence="1">Binds 2 manganese ions per subunit.</text>
</comment>
<comment type="subcellular location">
    <subcellularLocation>
        <location evidence="1">Cytoplasm</location>
    </subcellularLocation>
</comment>
<comment type="similarity">
    <text evidence="1">Belongs to the peptidase M17 family.</text>
</comment>
<organism>
    <name type="scientific">Bordetella pertussis (strain Tohama I / ATCC BAA-589 / NCTC 13251)</name>
    <dbReference type="NCBI Taxonomy" id="257313"/>
    <lineage>
        <taxon>Bacteria</taxon>
        <taxon>Pseudomonadati</taxon>
        <taxon>Pseudomonadota</taxon>
        <taxon>Betaproteobacteria</taxon>
        <taxon>Burkholderiales</taxon>
        <taxon>Alcaligenaceae</taxon>
        <taxon>Bordetella</taxon>
    </lineage>
</organism>
<name>AMPA_BORPE</name>
<dbReference type="EC" id="3.4.11.1" evidence="1"/>
<dbReference type="EC" id="3.4.11.10" evidence="1"/>
<dbReference type="EMBL" id="BX640418">
    <property type="protein sequence ID" value="CAE42692.1"/>
    <property type="molecule type" value="Genomic_DNA"/>
</dbReference>
<dbReference type="RefSeq" id="NP_881050.1">
    <property type="nucleotide sequence ID" value="NC_002929.2"/>
</dbReference>
<dbReference type="RefSeq" id="WP_003821370.1">
    <property type="nucleotide sequence ID" value="NZ_CP039022.1"/>
</dbReference>
<dbReference type="SMR" id="Q7VW48"/>
<dbReference type="STRING" id="257313.BP2421"/>
<dbReference type="MEROPS" id="M17.003"/>
<dbReference type="PaxDb" id="257313-BP2421"/>
<dbReference type="KEGG" id="bpe:BP2421"/>
<dbReference type="PATRIC" id="fig|257313.5.peg.2609"/>
<dbReference type="eggNOG" id="COG0260">
    <property type="taxonomic scope" value="Bacteria"/>
</dbReference>
<dbReference type="HOGENOM" id="CLU_013734_2_2_4"/>
<dbReference type="Proteomes" id="UP000002676">
    <property type="component" value="Chromosome"/>
</dbReference>
<dbReference type="GO" id="GO:0005737">
    <property type="term" value="C:cytoplasm"/>
    <property type="evidence" value="ECO:0007669"/>
    <property type="project" value="UniProtKB-SubCell"/>
</dbReference>
<dbReference type="GO" id="GO:0030145">
    <property type="term" value="F:manganese ion binding"/>
    <property type="evidence" value="ECO:0007669"/>
    <property type="project" value="UniProtKB-UniRule"/>
</dbReference>
<dbReference type="GO" id="GO:0070006">
    <property type="term" value="F:metalloaminopeptidase activity"/>
    <property type="evidence" value="ECO:0007669"/>
    <property type="project" value="InterPro"/>
</dbReference>
<dbReference type="GO" id="GO:0006508">
    <property type="term" value="P:proteolysis"/>
    <property type="evidence" value="ECO:0007669"/>
    <property type="project" value="UniProtKB-KW"/>
</dbReference>
<dbReference type="CDD" id="cd00433">
    <property type="entry name" value="Peptidase_M17"/>
    <property type="match status" value="1"/>
</dbReference>
<dbReference type="FunFam" id="3.40.630.10:FF:000004">
    <property type="entry name" value="Probable cytosol aminopeptidase"/>
    <property type="match status" value="1"/>
</dbReference>
<dbReference type="Gene3D" id="3.40.220.10">
    <property type="entry name" value="Leucine Aminopeptidase, subunit E, domain 1"/>
    <property type="match status" value="1"/>
</dbReference>
<dbReference type="Gene3D" id="3.40.630.10">
    <property type="entry name" value="Zn peptidases"/>
    <property type="match status" value="1"/>
</dbReference>
<dbReference type="HAMAP" id="MF_00181">
    <property type="entry name" value="Cytosol_peptidase_M17"/>
    <property type="match status" value="1"/>
</dbReference>
<dbReference type="InterPro" id="IPR011356">
    <property type="entry name" value="Leucine_aapep/pepB"/>
</dbReference>
<dbReference type="InterPro" id="IPR043472">
    <property type="entry name" value="Macro_dom-like"/>
</dbReference>
<dbReference type="InterPro" id="IPR000819">
    <property type="entry name" value="Peptidase_M17_C"/>
</dbReference>
<dbReference type="InterPro" id="IPR023042">
    <property type="entry name" value="Peptidase_M17_leu_NH2_pept"/>
</dbReference>
<dbReference type="InterPro" id="IPR008283">
    <property type="entry name" value="Peptidase_M17_N"/>
</dbReference>
<dbReference type="NCBIfam" id="NF002074">
    <property type="entry name" value="PRK00913.1-4"/>
    <property type="match status" value="1"/>
</dbReference>
<dbReference type="PANTHER" id="PTHR11963:SF23">
    <property type="entry name" value="CYTOSOL AMINOPEPTIDASE"/>
    <property type="match status" value="1"/>
</dbReference>
<dbReference type="PANTHER" id="PTHR11963">
    <property type="entry name" value="LEUCINE AMINOPEPTIDASE-RELATED"/>
    <property type="match status" value="1"/>
</dbReference>
<dbReference type="Pfam" id="PF00883">
    <property type="entry name" value="Peptidase_M17"/>
    <property type="match status" value="1"/>
</dbReference>
<dbReference type="Pfam" id="PF02789">
    <property type="entry name" value="Peptidase_M17_N"/>
    <property type="match status" value="1"/>
</dbReference>
<dbReference type="PRINTS" id="PR00481">
    <property type="entry name" value="LAMNOPPTDASE"/>
</dbReference>
<dbReference type="SUPFAM" id="SSF52949">
    <property type="entry name" value="Macro domain-like"/>
    <property type="match status" value="1"/>
</dbReference>
<dbReference type="SUPFAM" id="SSF53187">
    <property type="entry name" value="Zn-dependent exopeptidases"/>
    <property type="match status" value="1"/>
</dbReference>
<dbReference type="PROSITE" id="PS00631">
    <property type="entry name" value="CYTOSOL_AP"/>
    <property type="match status" value="1"/>
</dbReference>
<gene>
    <name evidence="1" type="primary">pepA</name>
    <name type="ordered locus">BP2421</name>
</gene>
<sequence length="499" mass="51729">MEFSTQTTASLHQIKTAALAVGVFADGVLSAAAEVIDRASHGAVAAVVKSEFRGRTGSTLVLRSLAGVSAQRVVLVGLGKQAEYNARAHASAEQAFAAACVAAQVGEGVSTLAGVAIEGVPVRARARSAAIAAGAAAYHYDATFGKANRDARPRLKKIVQVVDRAASAQAQLGLREGAAIAHGMELTRTLGNLPGNVCTPAYLGNTAKKLAREFKSLKVEVLERKQVEALGMGSFLSVARGSEEPLRFIVLRHAGKPAKKDKAGPVVLVGKGITFDAGGISLKPAATMDEMKYDMCGAASVLGTFRALAELELPLDVVGLIAACENLPSGKANKPGDVVTSMSGQTIEILNTDAEGRLVLCDALTYAERFKPAAVIDIATLTGACVVALGNVNSGLFSKDDALADALLAASRQSLDPAWRLPLDDAYQDQLKSNFADIANIGGPPAGAVTAACFLSRFTKAYPWAHLDIAGTAWRGGKDKGATGRPVPLLMQYLLDQAG</sequence>